<proteinExistence type="evidence at protein level"/>
<reference key="1">
    <citation type="journal article" date="1987" name="EMBO J.">
        <title>Human ribophorins I and II: the primary structure and membrane topology of two highly conserved rough endoplasmic reticulum-specific glycoproteins.</title>
        <authorList>
            <person name="Crimaudo C."/>
            <person name="Hortsch M."/>
            <person name="Gausepohl H."/>
            <person name="Meyer D.I."/>
        </authorList>
    </citation>
    <scope>NUCLEOTIDE SEQUENCE [MRNA]</scope>
</reference>
<reference key="2">
    <citation type="journal article" date="2004" name="Nat. Genet.">
        <title>Complete sequencing and characterization of 21,243 full-length human cDNAs.</title>
        <authorList>
            <person name="Ota T."/>
            <person name="Suzuki Y."/>
            <person name="Nishikawa T."/>
            <person name="Otsuki T."/>
            <person name="Sugiyama T."/>
            <person name="Irie R."/>
            <person name="Wakamatsu A."/>
            <person name="Hayashi K."/>
            <person name="Sato H."/>
            <person name="Nagai K."/>
            <person name="Kimura K."/>
            <person name="Makita H."/>
            <person name="Sekine M."/>
            <person name="Obayashi M."/>
            <person name="Nishi T."/>
            <person name="Shibahara T."/>
            <person name="Tanaka T."/>
            <person name="Ishii S."/>
            <person name="Yamamoto J."/>
            <person name="Saito K."/>
            <person name="Kawai Y."/>
            <person name="Isono Y."/>
            <person name="Nakamura Y."/>
            <person name="Nagahari K."/>
            <person name="Murakami K."/>
            <person name="Yasuda T."/>
            <person name="Iwayanagi T."/>
            <person name="Wagatsuma M."/>
            <person name="Shiratori A."/>
            <person name="Sudo H."/>
            <person name="Hosoiri T."/>
            <person name="Kaku Y."/>
            <person name="Kodaira H."/>
            <person name="Kondo H."/>
            <person name="Sugawara M."/>
            <person name="Takahashi M."/>
            <person name="Kanda K."/>
            <person name="Yokoi T."/>
            <person name="Furuya T."/>
            <person name="Kikkawa E."/>
            <person name="Omura Y."/>
            <person name="Abe K."/>
            <person name="Kamihara K."/>
            <person name="Katsuta N."/>
            <person name="Sato K."/>
            <person name="Tanikawa M."/>
            <person name="Yamazaki M."/>
            <person name="Ninomiya K."/>
            <person name="Ishibashi T."/>
            <person name="Yamashita H."/>
            <person name="Murakawa K."/>
            <person name="Fujimori K."/>
            <person name="Tanai H."/>
            <person name="Kimata M."/>
            <person name="Watanabe M."/>
            <person name="Hiraoka S."/>
            <person name="Chiba Y."/>
            <person name="Ishida S."/>
            <person name="Ono Y."/>
            <person name="Takiguchi S."/>
            <person name="Watanabe S."/>
            <person name="Yosida M."/>
            <person name="Hotuta T."/>
            <person name="Kusano J."/>
            <person name="Kanehori K."/>
            <person name="Takahashi-Fujii A."/>
            <person name="Hara H."/>
            <person name="Tanase T.-O."/>
            <person name="Nomura Y."/>
            <person name="Togiya S."/>
            <person name="Komai F."/>
            <person name="Hara R."/>
            <person name="Takeuchi K."/>
            <person name="Arita M."/>
            <person name="Imose N."/>
            <person name="Musashino K."/>
            <person name="Yuuki H."/>
            <person name="Oshima A."/>
            <person name="Sasaki N."/>
            <person name="Aotsuka S."/>
            <person name="Yoshikawa Y."/>
            <person name="Matsunawa H."/>
            <person name="Ichihara T."/>
            <person name="Shiohata N."/>
            <person name="Sano S."/>
            <person name="Moriya S."/>
            <person name="Momiyama H."/>
            <person name="Satoh N."/>
            <person name="Takami S."/>
            <person name="Terashima Y."/>
            <person name="Suzuki O."/>
            <person name="Nakagawa S."/>
            <person name="Senoh A."/>
            <person name="Mizoguchi H."/>
            <person name="Goto Y."/>
            <person name="Shimizu F."/>
            <person name="Wakebe H."/>
            <person name="Hishigaki H."/>
            <person name="Watanabe T."/>
            <person name="Sugiyama A."/>
            <person name="Takemoto M."/>
            <person name="Kawakami B."/>
            <person name="Yamazaki M."/>
            <person name="Watanabe K."/>
            <person name="Kumagai A."/>
            <person name="Itakura S."/>
            <person name="Fukuzumi Y."/>
            <person name="Fujimori Y."/>
            <person name="Komiyama M."/>
            <person name="Tashiro H."/>
            <person name="Tanigami A."/>
            <person name="Fujiwara T."/>
            <person name="Ono T."/>
            <person name="Yamada K."/>
            <person name="Fujii Y."/>
            <person name="Ozaki K."/>
            <person name="Hirao M."/>
            <person name="Ohmori Y."/>
            <person name="Kawabata A."/>
            <person name="Hikiji T."/>
            <person name="Kobatake N."/>
            <person name="Inagaki H."/>
            <person name="Ikema Y."/>
            <person name="Okamoto S."/>
            <person name="Okitani R."/>
            <person name="Kawakami T."/>
            <person name="Noguchi S."/>
            <person name="Itoh T."/>
            <person name="Shigeta K."/>
            <person name="Senba T."/>
            <person name="Matsumura K."/>
            <person name="Nakajima Y."/>
            <person name="Mizuno T."/>
            <person name="Morinaga M."/>
            <person name="Sasaki M."/>
            <person name="Togashi T."/>
            <person name="Oyama M."/>
            <person name="Hata H."/>
            <person name="Watanabe M."/>
            <person name="Komatsu T."/>
            <person name="Mizushima-Sugano J."/>
            <person name="Satoh T."/>
            <person name="Shirai Y."/>
            <person name="Takahashi Y."/>
            <person name="Nakagawa K."/>
            <person name="Okumura K."/>
            <person name="Nagase T."/>
            <person name="Nomura N."/>
            <person name="Kikuchi H."/>
            <person name="Masuho Y."/>
            <person name="Yamashita R."/>
            <person name="Nakai K."/>
            <person name="Yada T."/>
            <person name="Nakamura Y."/>
            <person name="Ohara O."/>
            <person name="Isogai T."/>
            <person name="Sugano S."/>
        </authorList>
    </citation>
    <scope>NUCLEOTIDE SEQUENCE [LARGE SCALE MRNA]</scope>
    <source>
        <tissue>Amygdala</tissue>
    </source>
</reference>
<reference key="3">
    <citation type="journal article" date="2007" name="BMC Genomics">
        <title>The full-ORF clone resource of the German cDNA consortium.</title>
        <authorList>
            <person name="Bechtel S."/>
            <person name="Rosenfelder H."/>
            <person name="Duda A."/>
            <person name="Schmidt C.P."/>
            <person name="Ernst U."/>
            <person name="Wellenreuther R."/>
            <person name="Mehrle A."/>
            <person name="Schuster C."/>
            <person name="Bahr A."/>
            <person name="Bloecker H."/>
            <person name="Heubner D."/>
            <person name="Hoerlein A."/>
            <person name="Michel G."/>
            <person name="Wedler H."/>
            <person name="Koehrer K."/>
            <person name="Ottenwaelder B."/>
            <person name="Poustka A."/>
            <person name="Wiemann S."/>
            <person name="Schupp I."/>
        </authorList>
    </citation>
    <scope>NUCLEOTIDE SEQUENCE [LARGE SCALE MRNA]</scope>
    <source>
        <tissue>Uterine endothelium</tissue>
    </source>
</reference>
<reference key="4">
    <citation type="submission" date="2005-09" db="EMBL/GenBank/DDBJ databases">
        <authorList>
            <person name="Mural R.J."/>
            <person name="Istrail S."/>
            <person name="Sutton G.G."/>
            <person name="Florea L."/>
            <person name="Halpern A.L."/>
            <person name="Mobarry C.M."/>
            <person name="Lippert R."/>
            <person name="Walenz B."/>
            <person name="Shatkay H."/>
            <person name="Dew I."/>
            <person name="Miller J.R."/>
            <person name="Flanigan M.J."/>
            <person name="Edwards N.J."/>
            <person name="Bolanos R."/>
            <person name="Fasulo D."/>
            <person name="Halldorsson B.V."/>
            <person name="Hannenhalli S."/>
            <person name="Turner R."/>
            <person name="Yooseph S."/>
            <person name="Lu F."/>
            <person name="Nusskern D.R."/>
            <person name="Shue B.C."/>
            <person name="Zheng X.H."/>
            <person name="Zhong F."/>
            <person name="Delcher A.L."/>
            <person name="Huson D.H."/>
            <person name="Kravitz S.A."/>
            <person name="Mouchard L."/>
            <person name="Reinert K."/>
            <person name="Remington K.A."/>
            <person name="Clark A.G."/>
            <person name="Waterman M.S."/>
            <person name="Eichler E.E."/>
            <person name="Adams M.D."/>
            <person name="Hunkapiller M.W."/>
            <person name="Myers E.W."/>
            <person name="Venter J.C."/>
        </authorList>
    </citation>
    <scope>NUCLEOTIDE SEQUENCE [LARGE SCALE GENOMIC DNA]</scope>
</reference>
<reference key="5">
    <citation type="journal article" date="2004" name="Genome Res.">
        <title>The status, quality, and expansion of the NIH full-length cDNA project: the Mammalian Gene Collection (MGC).</title>
        <authorList>
            <consortium name="The MGC Project Team"/>
        </authorList>
    </citation>
    <scope>NUCLEOTIDE SEQUENCE [LARGE SCALE MRNA]</scope>
    <source>
        <tissue>Cervix</tissue>
    </source>
</reference>
<reference key="6">
    <citation type="journal article" date="2003" name="J. Proteome Res.">
        <title>Proteomic analysis of early melanosomes: identification of novel melanosomal proteins.</title>
        <authorList>
            <person name="Basrur V."/>
            <person name="Yang F."/>
            <person name="Kushimoto T."/>
            <person name="Higashimoto Y."/>
            <person name="Yasumoto K."/>
            <person name="Valencia J."/>
            <person name="Muller J."/>
            <person name="Vieira W.D."/>
            <person name="Watabe H."/>
            <person name="Shabanowitz J."/>
            <person name="Hearing V.J."/>
            <person name="Hunt D.F."/>
            <person name="Appella E."/>
        </authorList>
    </citation>
    <scope>SUBCELLULAR LOCATION [LARGE SCALE ANALYSIS]</scope>
    <source>
        <tissue>Melanoma</tissue>
    </source>
</reference>
<reference key="7">
    <citation type="journal article" date="2003" name="Mol. Cell">
        <title>Oligosaccharyltransferase isoforms that contain different catalytic STT3 subunits have distinct enzymatic properties.</title>
        <authorList>
            <person name="Kelleher D.J."/>
            <person name="Karaoglu D."/>
            <person name="Mandon E.C."/>
            <person name="Gilmore R."/>
        </authorList>
    </citation>
    <scope>TISSUE SPECIFICITY</scope>
</reference>
<reference key="8">
    <citation type="journal article" date="2006" name="J. Proteome Res.">
        <title>Proteomic and bioinformatic characterization of the biogenesis and function of melanosomes.</title>
        <authorList>
            <person name="Chi A."/>
            <person name="Valencia J.C."/>
            <person name="Hu Z.-Z."/>
            <person name="Watabe H."/>
            <person name="Yamaguchi H."/>
            <person name="Mangini N.J."/>
            <person name="Huang H."/>
            <person name="Canfield V.A."/>
            <person name="Cheng K.C."/>
            <person name="Yang F."/>
            <person name="Abe R."/>
            <person name="Yamagishi S."/>
            <person name="Shabanowitz J."/>
            <person name="Hearing V.J."/>
            <person name="Wu C."/>
            <person name="Appella E."/>
            <person name="Hunt D.F."/>
        </authorList>
    </citation>
    <scope>SUBCELLULAR LOCATION [LARGE SCALE ANALYSIS]</scope>
    <source>
        <tissue>Melanoma</tissue>
    </source>
</reference>
<reference key="9">
    <citation type="journal article" date="2009" name="J. Proteome Res.">
        <title>Glycoproteomics analysis of human liver tissue by combination of multiple enzyme digestion and hydrazide chemistry.</title>
        <authorList>
            <person name="Chen R."/>
            <person name="Jiang X."/>
            <person name="Sun D."/>
            <person name="Han G."/>
            <person name="Wang F."/>
            <person name="Ye M."/>
            <person name="Wang L."/>
            <person name="Zou H."/>
        </authorList>
    </citation>
    <scope>GLYCOSYLATION [LARGE SCALE ANALYSIS] AT ASN-299</scope>
    <source>
        <tissue>Liver</tissue>
    </source>
</reference>
<reference key="10">
    <citation type="journal article" date="2009" name="Science">
        <title>Lysine acetylation targets protein complexes and co-regulates major cellular functions.</title>
        <authorList>
            <person name="Choudhary C."/>
            <person name="Kumar C."/>
            <person name="Gnad F."/>
            <person name="Nielsen M.L."/>
            <person name="Rehman M."/>
            <person name="Walther T.C."/>
            <person name="Olsen J.V."/>
            <person name="Mann M."/>
        </authorList>
    </citation>
    <scope>ACETYLATION [LARGE SCALE ANALYSIS] AT LYS-187</scope>
    <scope>IDENTIFICATION BY MASS SPECTROMETRY [LARGE SCALE ANALYSIS]</scope>
</reference>
<reference key="11">
    <citation type="journal article" date="2011" name="BMC Syst. Biol.">
        <title>Initial characterization of the human central proteome.</title>
        <authorList>
            <person name="Burkard T.R."/>
            <person name="Planyavsky M."/>
            <person name="Kaupe I."/>
            <person name="Breitwieser F.P."/>
            <person name="Buerckstuemmer T."/>
            <person name="Bennett K.L."/>
            <person name="Superti-Furga G."/>
            <person name="Colinge J."/>
        </authorList>
    </citation>
    <scope>IDENTIFICATION BY MASS SPECTROMETRY [LARGE SCALE ANALYSIS]</scope>
</reference>
<reference key="12">
    <citation type="journal article" date="2014" name="J. Cell Biol.">
        <title>Oxidoreductase activity is necessary for N-glycosylation of cysteine-proximal acceptor sites in glycoproteins.</title>
        <authorList>
            <person name="Cherepanova N.A."/>
            <person name="Shrimal S."/>
            <person name="Gilmore R."/>
        </authorList>
    </citation>
    <scope>IDENTIFICATION IN THE OLIGOSACCHARYLTRANSFERASE COMPLEX</scope>
</reference>
<reference key="13">
    <citation type="journal article" date="2013" name="J. Cell Sci.">
        <title>OST4 is a subunit of the mammalian oligosaccharyltransferase required for efficient N-glycosylation.</title>
        <authorList>
            <person name="Dumax-Vorzet A."/>
            <person name="Roboti P."/>
            <person name="High S."/>
        </authorList>
    </citation>
    <scope>IDENTIFICATION IN THE OLIGOSACCHARYLTRANSFERASE COMPLEX</scope>
</reference>
<reference key="14">
    <citation type="journal article" date="2014" name="J. Biol. Chem.">
        <title>Protein interaction screening for the ankyrin repeats and suppressor of cytokine signaling (SOCS) box (ASB) family identify Asb11 as a novel endoplasmic reticulum resident ubiquitin ligase.</title>
        <authorList>
            <person name="Andresen C.A."/>
            <person name="Smedegaard S."/>
            <person name="Sylvestersen K.B."/>
            <person name="Svensson C."/>
            <person name="Iglesias-Gato D."/>
            <person name="Cazzamali G."/>
            <person name="Nielsen T.K."/>
            <person name="Nielsen M.L."/>
            <person name="Flores-Morales A."/>
        </authorList>
    </citation>
    <scope>UBIQUITINATION</scope>
</reference>
<reference key="15">
    <citation type="journal article" date="2014" name="J. Proteomics">
        <title>An enzyme assisted RP-RPLC approach for in-depth analysis of human liver phosphoproteome.</title>
        <authorList>
            <person name="Bian Y."/>
            <person name="Song C."/>
            <person name="Cheng K."/>
            <person name="Dong M."/>
            <person name="Wang F."/>
            <person name="Huang J."/>
            <person name="Sun D."/>
            <person name="Wang L."/>
            <person name="Ye M."/>
            <person name="Zou H."/>
        </authorList>
    </citation>
    <scope>IDENTIFICATION BY MASS SPECTROMETRY [LARGE SCALE ANALYSIS]</scope>
    <source>
        <tissue>Liver</tissue>
    </source>
</reference>
<reference key="16">
    <citation type="journal article" date="2014" name="Proc. Natl. Acad. Sci. U.S.A.">
        <title>Mapping of SUMO sites and analysis of SUMOylation changes induced by external stimuli.</title>
        <authorList>
            <person name="Impens F."/>
            <person name="Radoshevich L."/>
            <person name="Cossart P."/>
            <person name="Ribet D."/>
        </authorList>
    </citation>
    <scope>SUMOYLATION [LARGE SCALE ANALYSIS] AT LYS-538</scope>
    <scope>IDENTIFICATION BY MASS SPECTROMETRY [LARGE SCALE ANALYSIS]</scope>
</reference>
<reference key="17">
    <citation type="journal article" date="2015" name="Proteomics">
        <title>N-terminome analysis of the human mitochondrial proteome.</title>
        <authorList>
            <person name="Vaca Jacome A.S."/>
            <person name="Rabilloud T."/>
            <person name="Schaeffer-Reiss C."/>
            <person name="Rompais M."/>
            <person name="Ayoub D."/>
            <person name="Lane L."/>
            <person name="Bairoch A."/>
            <person name="Van Dorsselaer A."/>
            <person name="Carapito C."/>
        </authorList>
    </citation>
    <scope>IDENTIFICATION BY MASS SPECTROMETRY [LARGE SCALE ANALYSIS]</scope>
</reference>
<reference key="18">
    <citation type="journal article" date="2020" name="Cell">
        <title>A genome-wide ER-phagy screen highlights key roles of mitochondrial metabolism and ER-Resident UFMylation.</title>
        <authorList>
            <person name="Liang J.R."/>
            <person name="Lingeman E."/>
            <person name="Luong T."/>
            <person name="Ahmed S."/>
            <person name="Muhar M."/>
            <person name="Nguyen T."/>
            <person name="Olzmann J.A."/>
            <person name="Corn J.E."/>
        </authorList>
    </citation>
    <scope>UFMYLATION</scope>
</reference>
<reference key="19">
    <citation type="journal article" date="2024" name="BMB Rep.">
        <title>Transmembrane E3 ligase RNF128 regulates N-glycosylation by promoting ribophorin I ubiquitination and degradation.</title>
        <authorList>
            <person name="Cho E.B."/>
            <person name="Vu V.A."/>
            <person name="Park S.H."/>
            <person name="Trinh L.T."/>
            <person name="Yoon J.B."/>
            <person name="Kim S."/>
        </authorList>
    </citation>
    <scope>FUNCTION</scope>
    <scope>UBIQUITINATION</scope>
</reference>
<reference evidence="16 17" key="20">
    <citation type="journal article" date="2019" name="Science">
        <title>Cryo-electron microscopy structures of human oligosaccharyltransferase complexes OST-A and OST-B.</title>
        <authorList>
            <person name="Ramirez A.S."/>
            <person name="Kowal J."/>
            <person name="Locher K.P."/>
        </authorList>
    </citation>
    <scope>STRUCTURE BY ELECTRON MICROSCOPY (3.50 ANGSTROMS)</scope>
    <scope>IDENTIFICATION OF THE OLIGOSACCHARYLTRANSFERASE (OST) COMPLEX</scope>
    <scope>FUNCTION</scope>
    <scope>PATHWAY</scope>
</reference>
<organism>
    <name type="scientific">Homo sapiens</name>
    <name type="common">Human</name>
    <dbReference type="NCBI Taxonomy" id="9606"/>
    <lineage>
        <taxon>Eukaryota</taxon>
        <taxon>Metazoa</taxon>
        <taxon>Chordata</taxon>
        <taxon>Craniata</taxon>
        <taxon>Vertebrata</taxon>
        <taxon>Euteleostomi</taxon>
        <taxon>Mammalia</taxon>
        <taxon>Eutheria</taxon>
        <taxon>Euarchontoglires</taxon>
        <taxon>Primates</taxon>
        <taxon>Haplorrhini</taxon>
        <taxon>Catarrhini</taxon>
        <taxon>Hominidae</taxon>
        <taxon>Homo</taxon>
    </lineage>
</organism>
<accession>P04843</accession>
<accession>B2R5Z0</accession>
<accession>D3DNB6</accession>
<accession>Q68DT1</accession>
<dbReference type="EMBL" id="Y00281">
    <property type="protein sequence ID" value="CAA68392.1"/>
    <property type="molecule type" value="mRNA"/>
</dbReference>
<dbReference type="EMBL" id="AK312369">
    <property type="protein sequence ID" value="BAG35287.1"/>
    <property type="molecule type" value="mRNA"/>
</dbReference>
<dbReference type="EMBL" id="CR749284">
    <property type="protein sequence ID" value="CAH18139.1"/>
    <property type="molecule type" value="mRNA"/>
</dbReference>
<dbReference type="EMBL" id="CH471052">
    <property type="protein sequence ID" value="EAW79306.1"/>
    <property type="molecule type" value="Genomic_DNA"/>
</dbReference>
<dbReference type="EMBL" id="CH471052">
    <property type="protein sequence ID" value="EAW79307.1"/>
    <property type="molecule type" value="Genomic_DNA"/>
</dbReference>
<dbReference type="EMBL" id="CH471052">
    <property type="protein sequence ID" value="EAW79308.1"/>
    <property type="molecule type" value="Genomic_DNA"/>
</dbReference>
<dbReference type="EMBL" id="BC010839">
    <property type="protein sequence ID" value="AAH10839.1"/>
    <property type="molecule type" value="mRNA"/>
</dbReference>
<dbReference type="CCDS" id="CCDS3051.1"/>
<dbReference type="PIR" id="A26168">
    <property type="entry name" value="A26168"/>
</dbReference>
<dbReference type="RefSeq" id="NP_002941.1">
    <property type="nucleotide sequence ID" value="NM_002950.4"/>
</dbReference>
<dbReference type="PDB" id="6S7O">
    <property type="method" value="EM"/>
    <property type="resolution" value="3.50 A"/>
    <property type="chains" value="E=1-607"/>
</dbReference>
<dbReference type="PDB" id="6S7T">
    <property type="method" value="EM"/>
    <property type="resolution" value="3.50 A"/>
    <property type="chains" value="E=1-607"/>
</dbReference>
<dbReference type="PDB" id="8B6L">
    <property type="method" value="EM"/>
    <property type="resolution" value="7.60 A"/>
    <property type="chains" value="O=1-607"/>
</dbReference>
<dbReference type="PDB" id="8PN9">
    <property type="method" value="EM"/>
    <property type="resolution" value="3.61 A"/>
    <property type="chains" value="E=1-607"/>
</dbReference>
<dbReference type="PDBsum" id="6S7O"/>
<dbReference type="PDBsum" id="6S7T"/>
<dbReference type="PDBsum" id="8B6L"/>
<dbReference type="PDBsum" id="8PN9"/>
<dbReference type="EMDB" id="EMD-10110"/>
<dbReference type="EMDB" id="EMD-10112"/>
<dbReference type="EMDB" id="EMD-15870"/>
<dbReference type="EMDB" id="EMD-17779"/>
<dbReference type="SMR" id="P04843"/>
<dbReference type="BioGRID" id="112099">
    <property type="interactions" value="845"/>
</dbReference>
<dbReference type="ComplexPortal" id="CPX-5621">
    <property type="entry name" value="Oligosaccharyltransferase complex A"/>
</dbReference>
<dbReference type="ComplexPortal" id="CPX-5622">
    <property type="entry name" value="Oligosaccharyltransferase complex B, MAGT1 variant"/>
</dbReference>
<dbReference type="ComplexPortal" id="CPX-8738">
    <property type="entry name" value="Oligosaccharyltransferase complex B, TUCS3 variant"/>
</dbReference>
<dbReference type="CORUM" id="P04843"/>
<dbReference type="DIP" id="DIP-38152N"/>
<dbReference type="FunCoup" id="P04843">
    <property type="interactions" value="3302"/>
</dbReference>
<dbReference type="IntAct" id="P04843">
    <property type="interactions" value="217"/>
</dbReference>
<dbReference type="MINT" id="P04843"/>
<dbReference type="STRING" id="9606.ENSP00000296255"/>
<dbReference type="ChEMBL" id="CHEMBL4295697"/>
<dbReference type="TCDB" id="9.B.142.3.17">
    <property type="family name" value="the integral membrane glycosyltransferase family 39 (gt39) family"/>
</dbReference>
<dbReference type="GlyConnect" id="1186">
    <property type="glycosylation" value="5 N-Linked glycans (1 site)"/>
</dbReference>
<dbReference type="GlyCosmos" id="P04843">
    <property type="glycosylation" value="2 sites, 7 glycans"/>
</dbReference>
<dbReference type="GlyGen" id="P04843">
    <property type="glycosylation" value="13 sites, 18 N-linked glycans (2 sites), 3 O-linked glycans (11 sites)"/>
</dbReference>
<dbReference type="iPTMnet" id="P04843"/>
<dbReference type="PhosphoSitePlus" id="P04843"/>
<dbReference type="SwissPalm" id="P04843"/>
<dbReference type="BioMuta" id="RPN1"/>
<dbReference type="DMDM" id="132559"/>
<dbReference type="CPTAC" id="CPTAC-125"/>
<dbReference type="CPTAC" id="CPTAC-126"/>
<dbReference type="jPOST" id="P04843"/>
<dbReference type="MassIVE" id="P04843"/>
<dbReference type="PaxDb" id="9606-ENSP00000296255"/>
<dbReference type="PeptideAtlas" id="P04843"/>
<dbReference type="ProteomicsDB" id="51749"/>
<dbReference type="Pumba" id="P04843"/>
<dbReference type="TopDownProteomics" id="P04843"/>
<dbReference type="Antibodypedia" id="4058">
    <property type="antibodies" value="579 antibodies from 31 providers"/>
</dbReference>
<dbReference type="DNASU" id="6184"/>
<dbReference type="Ensembl" id="ENST00000296255.8">
    <property type="protein sequence ID" value="ENSP00000296255.3"/>
    <property type="gene ID" value="ENSG00000163902.12"/>
</dbReference>
<dbReference type="GeneID" id="6184"/>
<dbReference type="KEGG" id="hsa:6184"/>
<dbReference type="MANE-Select" id="ENST00000296255.8">
    <property type="protein sequence ID" value="ENSP00000296255.3"/>
    <property type="RefSeq nucleotide sequence ID" value="NM_002950.4"/>
    <property type="RefSeq protein sequence ID" value="NP_002941.1"/>
</dbReference>
<dbReference type="UCSC" id="uc003ekr.2">
    <property type="organism name" value="human"/>
</dbReference>
<dbReference type="AGR" id="HGNC:10381"/>
<dbReference type="CTD" id="6184"/>
<dbReference type="DisGeNET" id="6184"/>
<dbReference type="GeneCards" id="RPN1"/>
<dbReference type="HGNC" id="HGNC:10381">
    <property type="gene designation" value="RPN1"/>
</dbReference>
<dbReference type="HPA" id="ENSG00000163902">
    <property type="expression patterns" value="Low tissue specificity"/>
</dbReference>
<dbReference type="MalaCards" id="RPN1"/>
<dbReference type="MIM" id="180470">
    <property type="type" value="gene"/>
</dbReference>
<dbReference type="neXtProt" id="NX_P04843"/>
<dbReference type="OpenTargets" id="ENSG00000163902"/>
<dbReference type="Orphanet" id="402020">
    <property type="disease" value="Acute myeloid leukemia with inv(3)(q21q26.2) or t(3;3)(q21;q26.2)"/>
</dbReference>
<dbReference type="PharmGKB" id="PA34777"/>
<dbReference type="VEuPathDB" id="HostDB:ENSG00000163902"/>
<dbReference type="eggNOG" id="KOG2291">
    <property type="taxonomic scope" value="Eukaryota"/>
</dbReference>
<dbReference type="GeneTree" id="ENSGT00390000009630"/>
<dbReference type="InParanoid" id="P04843"/>
<dbReference type="OMA" id="RYEYARE"/>
<dbReference type="OrthoDB" id="310030at2759"/>
<dbReference type="PAN-GO" id="P04843">
    <property type="GO annotations" value="2 GO annotations based on evolutionary models"/>
</dbReference>
<dbReference type="PhylomeDB" id="P04843"/>
<dbReference type="TreeFam" id="TF312988"/>
<dbReference type="BRENDA" id="2.4.99.18">
    <property type="organism ID" value="2681"/>
</dbReference>
<dbReference type="PathwayCommons" id="P04843"/>
<dbReference type="Reactome" id="R-HSA-1799339">
    <property type="pathway name" value="SRP-dependent cotranslational protein targeting to membrane"/>
</dbReference>
<dbReference type="Reactome" id="R-HSA-446203">
    <property type="pathway name" value="Asparagine N-linked glycosylation"/>
</dbReference>
<dbReference type="Reactome" id="R-HSA-9694548">
    <property type="pathway name" value="Maturation of spike protein"/>
</dbReference>
<dbReference type="SignaLink" id="P04843"/>
<dbReference type="SIGNOR" id="P04843"/>
<dbReference type="UniPathway" id="UPA00378"/>
<dbReference type="BioGRID-ORCS" id="6184">
    <property type="hits" value="643 hits in 1163 CRISPR screens"/>
</dbReference>
<dbReference type="CD-CODE" id="FB4E32DD">
    <property type="entry name" value="Presynaptic clusters and postsynaptic densities"/>
</dbReference>
<dbReference type="ChiTaRS" id="RPN1">
    <property type="organism name" value="human"/>
</dbReference>
<dbReference type="GeneWiki" id="RPN1"/>
<dbReference type="GenomeRNAi" id="6184"/>
<dbReference type="Pharos" id="P04843">
    <property type="development level" value="Tbio"/>
</dbReference>
<dbReference type="PRO" id="PR:P04843"/>
<dbReference type="Proteomes" id="UP000005640">
    <property type="component" value="Chromosome 3"/>
</dbReference>
<dbReference type="RNAct" id="P04843">
    <property type="molecule type" value="protein"/>
</dbReference>
<dbReference type="Bgee" id="ENSG00000163902">
    <property type="expression patterns" value="Expressed in stromal cell of endometrium and 206 other cell types or tissues"/>
</dbReference>
<dbReference type="ExpressionAtlas" id="P04843">
    <property type="expression patterns" value="baseline and differential"/>
</dbReference>
<dbReference type="GO" id="GO:0005829">
    <property type="term" value="C:cytosol"/>
    <property type="evidence" value="ECO:0000314"/>
    <property type="project" value="HPA"/>
</dbReference>
<dbReference type="GO" id="GO:0005783">
    <property type="term" value="C:endoplasmic reticulum"/>
    <property type="evidence" value="ECO:0000314"/>
    <property type="project" value="HPA"/>
</dbReference>
<dbReference type="GO" id="GO:0005789">
    <property type="term" value="C:endoplasmic reticulum membrane"/>
    <property type="evidence" value="ECO:0000304"/>
    <property type="project" value="Reactome"/>
</dbReference>
<dbReference type="GO" id="GO:0042470">
    <property type="term" value="C:melanosome"/>
    <property type="evidence" value="ECO:0007669"/>
    <property type="project" value="UniProtKB-SubCell"/>
</dbReference>
<dbReference type="GO" id="GO:0016020">
    <property type="term" value="C:membrane"/>
    <property type="evidence" value="ECO:0007005"/>
    <property type="project" value="UniProtKB"/>
</dbReference>
<dbReference type="GO" id="GO:0008250">
    <property type="term" value="C:oligosaccharyltransferase complex"/>
    <property type="evidence" value="ECO:0000314"/>
    <property type="project" value="UniProtKB"/>
</dbReference>
<dbReference type="GO" id="GO:0160226">
    <property type="term" value="C:oligosaccharyltransferase complex A"/>
    <property type="evidence" value="ECO:0000314"/>
    <property type="project" value="UniProtKB"/>
</dbReference>
<dbReference type="GO" id="GO:0160227">
    <property type="term" value="C:oligosaccharyltransferase complex B"/>
    <property type="evidence" value="ECO:0000314"/>
    <property type="project" value="UniProtKB"/>
</dbReference>
<dbReference type="GO" id="GO:0005791">
    <property type="term" value="C:rough endoplasmic reticulum"/>
    <property type="evidence" value="ECO:0007669"/>
    <property type="project" value="Ensembl"/>
</dbReference>
<dbReference type="GO" id="GO:0003723">
    <property type="term" value="F:RNA binding"/>
    <property type="evidence" value="ECO:0007005"/>
    <property type="project" value="UniProtKB"/>
</dbReference>
<dbReference type="GO" id="GO:0006487">
    <property type="term" value="P:protein N-linked glycosylation"/>
    <property type="evidence" value="ECO:0000314"/>
    <property type="project" value="UniProtKB"/>
</dbReference>
<dbReference type="GO" id="GO:0018279">
    <property type="term" value="P:protein N-linked glycosylation via asparagine"/>
    <property type="evidence" value="ECO:0000315"/>
    <property type="project" value="UniProtKB"/>
</dbReference>
<dbReference type="InterPro" id="IPR007676">
    <property type="entry name" value="Ribophorin_I"/>
</dbReference>
<dbReference type="PANTHER" id="PTHR21049:SF0">
    <property type="entry name" value="DOLICHYL-DIPHOSPHOOLIGOSACCHARIDE--PROTEIN GLYCOSYLTRANSFERASE SUBUNIT 1"/>
    <property type="match status" value="1"/>
</dbReference>
<dbReference type="PANTHER" id="PTHR21049">
    <property type="entry name" value="RIBOPHORIN I"/>
    <property type="match status" value="1"/>
</dbReference>
<dbReference type="Pfam" id="PF04597">
    <property type="entry name" value="Ribophorin_I"/>
    <property type="match status" value="1"/>
</dbReference>
<gene>
    <name evidence="15" type="primary">RPN1</name>
</gene>
<keyword id="KW-0002">3D-structure</keyword>
<keyword id="KW-0007">Acetylation</keyword>
<keyword id="KW-0256">Endoplasmic reticulum</keyword>
<keyword id="KW-0325">Glycoprotein</keyword>
<keyword id="KW-1017">Isopeptide bond</keyword>
<keyword id="KW-0472">Membrane</keyword>
<keyword id="KW-1267">Proteomics identification</keyword>
<keyword id="KW-1185">Reference proteome</keyword>
<keyword id="KW-0732">Signal</keyword>
<keyword id="KW-0812">Transmembrane</keyword>
<keyword id="KW-1133">Transmembrane helix</keyword>
<keyword id="KW-0832">Ubl conjugation</keyword>
<sequence length="607" mass="68569">MEAPAAGLFLLLLLGTWAPAPGSASSEAPPLINEDVKRTVDLSSHLAKVTAEVVLAHLGGGSTSRATSFLLALEPELEARLAHLGVQVKGEDEEENNLEVRETKIKGKSGRFFTVKLPVALDPGAKISVIVETVYTHVLHPYPTQITQSEKQFVVFEGNHYFYSPYPTKTQTMRVKLASRNVESYTKLGNPTRSEDLLDYGPFRDVPAYSQDTFKVHYENNSPFLTITSMTRVIEVSHWGNIAVEENVDLKHTGAVLKGPFSRYDYQRQPDSGISSIRSFKTILPAAAQDVYYRDEIGNVSTSHLLILDDSVEMEIRPRFPLFGGWKTHYIVGYNLPSYEYLYNLGDQYALKMRFVDHVFDEQVIDSLTVKIILPEGAKNIEIDSPYEISRAPDELHYTYLDTFGRPVIVAYKKNLVEQHIQDIVVHYTFNKVLMLQEPLLVVAAFYILFFTVIIYVRLDFSITKDPAAEARMKVACITEQVLTLVNKRIGLYRHFDETVNRYKQSRDISTLNSGKKSLETEHKALTSEIALLQSRLKTEGSDLCDRVSEMQKLDAQVKELVLKSAVEAERLVAGKLKKDTYIENEKLISGKRQELVTKIDHILDAL</sequence>
<feature type="signal peptide">
    <location>
        <begin position="1"/>
        <end position="23"/>
    </location>
</feature>
<feature type="chain" id="PRO_0000022241" description="Dolichyl-diphosphooligosaccharide--protein glycosyltransferase subunit 1">
    <location>
        <begin position="24"/>
        <end position="607"/>
    </location>
</feature>
<feature type="topological domain" description="Lumenal" evidence="3">
    <location>
        <begin position="24"/>
        <end position="438"/>
    </location>
</feature>
<feature type="transmembrane region" description="Helical" evidence="3">
    <location>
        <begin position="439"/>
        <end position="457"/>
    </location>
</feature>
<feature type="topological domain" description="Cytoplasmic" evidence="3">
    <location>
        <begin position="458"/>
        <end position="607"/>
    </location>
</feature>
<feature type="modified residue" description="N6-acetyllysine" evidence="18">
    <location>
        <position position="187"/>
    </location>
</feature>
<feature type="modified residue" description="N6-acetyllysine; alternate" evidence="2">
    <location>
        <position position="538"/>
    </location>
</feature>
<feature type="glycosylation site" description="N-linked (GlcNAc...) asparagine" evidence="7">
    <location>
        <position position="299"/>
    </location>
</feature>
<feature type="cross-link" description="Glycyl lysine isopeptide (Lys-Gly) (interchain with G-Cter in SUMO2); alternate" evidence="19">
    <location>
        <position position="538"/>
    </location>
</feature>
<feature type="strand" evidence="20">
    <location>
        <begin position="31"/>
        <end position="33"/>
    </location>
</feature>
<feature type="strand" evidence="20">
    <location>
        <begin position="35"/>
        <end position="41"/>
    </location>
</feature>
<feature type="strand" evidence="20">
    <location>
        <begin position="43"/>
        <end position="57"/>
    </location>
</feature>
<feature type="strand" evidence="20">
    <location>
        <begin position="66"/>
        <end position="71"/>
    </location>
</feature>
<feature type="strand" evidence="20">
    <location>
        <begin position="77"/>
        <end position="80"/>
    </location>
</feature>
<feature type="strand" evidence="20">
    <location>
        <begin position="83"/>
        <end position="91"/>
    </location>
</feature>
<feature type="strand" evidence="20">
    <location>
        <begin position="95"/>
        <end position="98"/>
    </location>
</feature>
<feature type="strand" evidence="20">
    <location>
        <begin position="113"/>
        <end position="121"/>
    </location>
</feature>
<feature type="strand" evidence="20">
    <location>
        <begin position="126"/>
        <end position="137"/>
    </location>
</feature>
<feature type="strand" evidence="20">
    <location>
        <begin position="140"/>
        <end position="143"/>
    </location>
</feature>
<feature type="strand" evidence="20">
    <location>
        <begin position="153"/>
        <end position="158"/>
    </location>
</feature>
<feature type="strand" evidence="20">
    <location>
        <begin position="169"/>
        <end position="176"/>
    </location>
</feature>
<feature type="strand" evidence="20">
    <location>
        <begin position="178"/>
        <end position="180"/>
    </location>
</feature>
<feature type="strand" evidence="21">
    <location>
        <begin position="182"/>
        <end position="185"/>
    </location>
</feature>
<feature type="strand" evidence="20">
    <location>
        <begin position="195"/>
        <end position="199"/>
    </location>
</feature>
<feature type="strand" evidence="20">
    <location>
        <begin position="214"/>
        <end position="219"/>
    </location>
</feature>
<feature type="strand" evidence="20">
    <location>
        <begin position="226"/>
        <end position="235"/>
    </location>
</feature>
<feature type="strand" evidence="20">
    <location>
        <begin position="238"/>
        <end position="240"/>
    </location>
</feature>
<feature type="strand" evidence="20">
    <location>
        <begin position="242"/>
        <end position="251"/>
    </location>
</feature>
<feature type="strand" evidence="20">
    <location>
        <begin position="254"/>
        <end position="257"/>
    </location>
</feature>
<feature type="helix" evidence="20">
    <location>
        <begin position="263"/>
        <end position="267"/>
    </location>
</feature>
<feature type="strand" evidence="20">
    <location>
        <begin position="270"/>
        <end position="272"/>
    </location>
</feature>
<feature type="strand" evidence="20">
    <location>
        <begin position="280"/>
        <end position="284"/>
    </location>
</feature>
<feature type="strand" evidence="21">
    <location>
        <begin position="292"/>
        <end position="294"/>
    </location>
</feature>
<feature type="strand" evidence="20">
    <location>
        <begin position="296"/>
        <end position="299"/>
    </location>
</feature>
<feature type="strand" evidence="20">
    <location>
        <begin position="303"/>
        <end position="307"/>
    </location>
</feature>
<feature type="strand" evidence="20">
    <location>
        <begin position="312"/>
        <end position="316"/>
    </location>
</feature>
<feature type="strand" evidence="20">
    <location>
        <begin position="328"/>
        <end position="336"/>
    </location>
</feature>
<feature type="helix" evidence="20">
    <location>
        <begin position="339"/>
        <end position="341"/>
    </location>
</feature>
<feature type="strand" evidence="20">
    <location>
        <begin position="342"/>
        <end position="345"/>
    </location>
</feature>
<feature type="strand" evidence="20">
    <location>
        <begin position="348"/>
        <end position="356"/>
    </location>
</feature>
<feature type="strand" evidence="20">
    <location>
        <begin position="364"/>
        <end position="366"/>
    </location>
</feature>
<feature type="strand" evidence="20">
    <location>
        <begin position="368"/>
        <end position="373"/>
    </location>
</feature>
<feature type="strand" evidence="20">
    <location>
        <begin position="382"/>
        <end position="384"/>
    </location>
</feature>
<feature type="strand" evidence="20">
    <location>
        <begin position="395"/>
        <end position="397"/>
    </location>
</feature>
<feature type="strand" evidence="20">
    <location>
        <begin position="406"/>
        <end position="413"/>
    </location>
</feature>
<feature type="strand" evidence="20">
    <location>
        <begin position="415"/>
        <end position="417"/>
    </location>
</feature>
<feature type="helix" evidence="20">
    <location>
        <begin position="418"/>
        <end position="420"/>
    </location>
</feature>
<feature type="strand" evidence="20">
    <location>
        <begin position="423"/>
        <end position="429"/>
    </location>
</feature>
<feature type="helix" evidence="20">
    <location>
        <begin position="433"/>
        <end position="436"/>
    </location>
</feature>
<feature type="helix" evidence="20">
    <location>
        <begin position="437"/>
        <end position="456"/>
    </location>
</feature>
<feature type="helix" evidence="20">
    <location>
        <begin position="467"/>
        <end position="500"/>
    </location>
</feature>
<feature type="turn" evidence="20">
    <location>
        <begin position="506"/>
        <end position="508"/>
    </location>
</feature>
<feature type="helix" evidence="20">
    <location>
        <begin position="509"/>
        <end position="533"/>
    </location>
</feature>
<feature type="strand" evidence="20">
    <location>
        <begin position="535"/>
        <end position="537"/>
    </location>
</feature>
<feature type="helix" evidence="20">
    <location>
        <begin position="541"/>
        <end position="564"/>
    </location>
</feature>
<feature type="strand" evidence="20">
    <location>
        <begin position="567"/>
        <end position="569"/>
    </location>
</feature>
<feature type="helix" evidence="20">
    <location>
        <begin position="573"/>
        <end position="592"/>
    </location>
</feature>
<protein>
    <recommendedName>
        <fullName evidence="14">Dolichyl-diphosphooligosaccharide--protein glycosyltransferase subunit 1</fullName>
    </recommendedName>
    <alternativeName>
        <fullName>Dolichyl-diphosphooligosaccharide--protein glycosyltransferase 67 kDa subunit</fullName>
    </alternativeName>
    <alternativeName>
        <fullName>Ribophorin I</fullName>
        <shortName>RPN-I</shortName>
    </alternativeName>
    <alternativeName>
        <fullName>Ribophorin-1</fullName>
    </alternativeName>
</protein>
<comment type="function">
    <text evidence="1 11 13">Subunit of the oligosaccharyl transferase (OST) complex that catalyzes the initial transfer of a defined glycan (Glc(3)Man(9)GlcNAc(2) in eukaryotes) from the lipid carrier dolichol-pyrophosphate to an asparagine residue within an Asn-X-Ser/Thr consensus motif in nascent polypeptide chains, the first step in protein N-glycosylation (PubMed:31831667). N-glycosylation occurs cotranslationally and the complex associates with the Sec61 complex at the channel-forming translocon complex that mediates protein translocation across the endoplasmic reticulum (ER). All subunits are required for a maximal enzyme activity (By similarity).</text>
</comment>
<comment type="pathway">
    <text evidence="11">Protein modification; protein glycosylation.</text>
</comment>
<comment type="subunit">
    <text evidence="1 2 8 10 11">Component of the oligosaccharyltransferase (OST) complex (PubMed:31831667). OST exists in two different complex forms which contain common core subunits RPN1, RPN2, OST48, OST4, DAD1 and TMEM258, either STT3A or STT3B as catalytic subunits, and form-specific accessory subunits (PubMed:23606741, PubMed:25135935, PubMed:31831667). STT3A complex assembly occurs through the formation of 3 subcomplexes. Subcomplex 1 contains RPN1 and TMEM258, subcomplex 2 contains the STT3A-specific subunits STT3A, DC2/OSTC, and KCP2 as well as the core subunit OST4, and subcomplex 3 contains RPN2, DAD1, and OST48. The STT3A complex can form stable complexes with the Sec61 complex or with both the Sec61 and TRAP complexes (By similarity). Interacts with TMEM35A/NACHO (By similarity).</text>
</comment>
<comment type="interaction">
    <interactant intactId="EBI-355963">
        <id>P04843</id>
    </interactant>
    <interactant intactId="EBI-1748958">
        <id>P49069</id>
        <label>CAMLG</label>
    </interactant>
    <organismsDiffer>false</organismsDiffer>
    <experiments>3</experiments>
</comment>
<comment type="interaction">
    <interactant intactId="EBI-355963">
        <id>P04843</id>
    </interactant>
    <interactant intactId="EBI-11749135">
        <id>Q8IUG1</id>
        <label>KRTAP1-3</label>
    </interactant>
    <organismsDiffer>false</organismsDiffer>
    <experiments>3</experiments>
</comment>
<comment type="interaction">
    <interactant intactId="EBI-355963">
        <id>P04843</id>
    </interactant>
    <interactant intactId="EBI-1046466">
        <id>Q14165</id>
        <label>MLEC</label>
    </interactant>
    <organismsDiffer>false</organismsDiffer>
    <experiments>3</experiments>
</comment>
<comment type="interaction">
    <interactant intactId="EBI-355963">
        <id>P04843</id>
    </interactant>
    <interactant intactId="EBI-11337900">
        <id>Q9H5K3</id>
        <label>POMK</label>
    </interactant>
    <organismsDiffer>false</organismsDiffer>
    <experiments>2</experiments>
</comment>
<comment type="interaction">
    <interactant intactId="EBI-355963">
        <id>P04843</id>
    </interactant>
    <interactant intactId="EBI-347996">
        <id>O43765</id>
        <label>SGTA</label>
    </interactant>
    <organismsDiffer>false</organismsDiffer>
    <experiments>7</experiments>
</comment>
<comment type="interaction">
    <interactant intactId="EBI-355963">
        <id>P04843</id>
    </interactant>
    <interactant intactId="EBI-719212">
        <id>P46977</id>
        <label>STT3A</label>
    </interactant>
    <organismsDiffer>false</organismsDiffer>
    <experiments>3</experiments>
</comment>
<comment type="interaction">
    <interactant intactId="EBI-355963">
        <id>P04843</id>
    </interactant>
    <interactant intactId="EBI-2256290">
        <id>Q8TCJ2</id>
        <label>STT3B</label>
    </interactant>
    <organismsDiffer>false</organismsDiffer>
    <experiments>4</experiments>
</comment>
<comment type="interaction">
    <interactant intactId="EBI-355963">
        <id>P04843</id>
    </interactant>
    <interactant intactId="EBI-741480">
        <id>Q9UMX0</id>
        <label>UBQLN1</label>
    </interactant>
    <organismsDiffer>false</organismsDiffer>
    <experiments>4</experiments>
</comment>
<comment type="interaction">
    <interactant intactId="EBI-355963">
        <id>P04843</id>
    </interactant>
    <interactant intactId="EBI-10173939">
        <id>Q9UMX0-2</id>
        <label>UBQLN1</label>
    </interactant>
    <organismsDiffer>false</organismsDiffer>
    <experiments>3</experiments>
</comment>
<comment type="subcellular location">
    <subcellularLocation>
        <location evidence="1">Endoplasmic reticulum membrane</location>
        <topology evidence="1">Single-pass type I membrane protein</topology>
    </subcellularLocation>
    <subcellularLocation>
        <location evidence="4 6">Melanosome</location>
    </subcellularLocation>
    <text evidence="4 6">Identified by mass spectrometry in melanosome fractions from stage I to stage IV.</text>
</comment>
<comment type="tissue specificity">
    <text evidence="5">Expressed in all tissues tested.</text>
</comment>
<comment type="PTM">
    <text evidence="9 13">Ubiquitinated by the ECS(ASB11) complex. Ubiquitinated by RNF128, leading to degradation in a proteasome/lysosome-dependent manner (PubMed:39567208).</text>
</comment>
<comment type="PTM">
    <text evidence="12">Ufmylated by UFL1 in response to endoplasmic reticulum stress, promoting reticulophagy of endoplasmic reticulum sheets.</text>
</comment>
<comment type="similarity">
    <text evidence="14">Belongs to the OST1 family.</text>
</comment>
<name>RPN1_HUMAN</name>
<evidence type="ECO:0000250" key="1">
    <source>
        <dbReference type="UniProtKB" id="E2RQ08"/>
    </source>
</evidence>
<evidence type="ECO:0000250" key="2">
    <source>
        <dbReference type="UniProtKB" id="Q91YQ5"/>
    </source>
</evidence>
<evidence type="ECO:0000255" key="3"/>
<evidence type="ECO:0000269" key="4">
    <source>
    </source>
</evidence>
<evidence type="ECO:0000269" key="5">
    <source>
    </source>
</evidence>
<evidence type="ECO:0000269" key="6">
    <source>
    </source>
</evidence>
<evidence type="ECO:0000269" key="7">
    <source>
    </source>
</evidence>
<evidence type="ECO:0000269" key="8">
    <source>
    </source>
</evidence>
<evidence type="ECO:0000269" key="9">
    <source>
    </source>
</evidence>
<evidence type="ECO:0000269" key="10">
    <source>
    </source>
</evidence>
<evidence type="ECO:0000269" key="11">
    <source>
    </source>
</evidence>
<evidence type="ECO:0000269" key="12">
    <source>
    </source>
</evidence>
<evidence type="ECO:0000269" key="13">
    <source>
    </source>
</evidence>
<evidence type="ECO:0000305" key="14"/>
<evidence type="ECO:0000312" key="15">
    <source>
        <dbReference type="HGNC" id="HGNC:10381"/>
    </source>
</evidence>
<evidence type="ECO:0007744" key="16">
    <source>
        <dbReference type="PDB" id="6S7O"/>
    </source>
</evidence>
<evidence type="ECO:0007744" key="17">
    <source>
        <dbReference type="PDB" id="6S7T"/>
    </source>
</evidence>
<evidence type="ECO:0007744" key="18">
    <source>
    </source>
</evidence>
<evidence type="ECO:0007744" key="19">
    <source>
    </source>
</evidence>
<evidence type="ECO:0007829" key="20">
    <source>
        <dbReference type="PDB" id="6S7O"/>
    </source>
</evidence>
<evidence type="ECO:0007829" key="21">
    <source>
        <dbReference type="PDB" id="6S7T"/>
    </source>
</evidence>